<protein>
    <recommendedName>
        <fullName evidence="1">Formate--tetrahydrofolate ligase 1</fullName>
        <ecNumber evidence="1">6.3.4.3</ecNumber>
    </recommendedName>
    <alternativeName>
        <fullName evidence="1">Formyltetrahydrofolate synthetase 1</fullName>
        <shortName evidence="1">FHS 1</shortName>
        <shortName evidence="1">FTHFS 1</shortName>
    </alternativeName>
</protein>
<reference key="1">
    <citation type="journal article" date="2006" name="Proc. Natl. Acad. Sci. U.S.A.">
        <title>Molecular genetic anatomy of inter- and intraserotype variation in the human bacterial pathogen group A Streptococcus.</title>
        <authorList>
            <person name="Beres S.B."/>
            <person name="Richter E.W."/>
            <person name="Nagiec M.J."/>
            <person name="Sumby P."/>
            <person name="Porcella S.F."/>
            <person name="DeLeo F.R."/>
            <person name="Musser J.M."/>
        </authorList>
    </citation>
    <scope>NUCLEOTIDE SEQUENCE [LARGE SCALE GENOMIC DNA]</scope>
    <source>
        <strain>MGAS10270</strain>
    </source>
</reference>
<name>FTHS1_STRPD</name>
<comment type="catalytic activity">
    <reaction evidence="1">
        <text>(6S)-5,6,7,8-tetrahydrofolate + formate + ATP = (6R)-10-formyltetrahydrofolate + ADP + phosphate</text>
        <dbReference type="Rhea" id="RHEA:20221"/>
        <dbReference type="ChEBI" id="CHEBI:15740"/>
        <dbReference type="ChEBI" id="CHEBI:30616"/>
        <dbReference type="ChEBI" id="CHEBI:43474"/>
        <dbReference type="ChEBI" id="CHEBI:57453"/>
        <dbReference type="ChEBI" id="CHEBI:195366"/>
        <dbReference type="ChEBI" id="CHEBI:456216"/>
        <dbReference type="EC" id="6.3.4.3"/>
    </reaction>
</comment>
<comment type="pathway">
    <text evidence="1">One-carbon metabolism; tetrahydrofolate interconversion.</text>
</comment>
<comment type="similarity">
    <text evidence="1">Belongs to the formate--tetrahydrofolate ligase family.</text>
</comment>
<feature type="chain" id="PRO_0000293063" description="Formate--tetrahydrofolate ligase 1">
    <location>
        <begin position="1"/>
        <end position="556"/>
    </location>
</feature>
<feature type="binding site" evidence="1">
    <location>
        <begin position="65"/>
        <end position="72"/>
    </location>
    <ligand>
        <name>ATP</name>
        <dbReference type="ChEBI" id="CHEBI:30616"/>
    </ligand>
</feature>
<evidence type="ECO:0000255" key="1">
    <source>
        <dbReference type="HAMAP-Rule" id="MF_01543"/>
    </source>
</evidence>
<keyword id="KW-0067">ATP-binding</keyword>
<keyword id="KW-0436">Ligase</keyword>
<keyword id="KW-0547">Nucleotide-binding</keyword>
<keyword id="KW-0554">One-carbon metabolism</keyword>
<accession>Q1JGN8</accession>
<sequence length="556" mass="59531">MKSDIEIAQSVALQPITDIVKKVGIDGDDIELYGKYKAKLSFEKMKAVEANEPGKLLLVTAINPTPAGEGKSTMSIGLADALNQMGKKTMLALREPSLGPVMGIKGGAAGGGYAQVLPMEDINLHFTGDMHAITTANNALSALIDNHLQQGNDLGIDPRRIIWKRVLDLNDRALRQVIVGLGSPVNGVPREDGFDITVASEIMAILCLATDLKDLKKRLADIVVAYTYDRKPVYVRDLKVEGALTLILKDAIKPNLVQTIYGTPALIHGGPFANIAHGCNSVLATSTALRLADYTVTEAGFGADLGAEKFLNIKVPNLPKAPDAIVIVATLRALKMHGGVAKSDLAAENCEAVRLGFANLKRHVENMRQFKVPVVVAINEFVADTEAEIATLKALCEEIKVPVELASVWANGAEGGLALAKTVVRVIDQEAADYKRLYSDEDTLEEKVINIVTQIYGGKAVQFGPKAKTQLKQFAEFGWDKLPVCMAKTQYSFSDNPSLLGAPTDFDITIREFVPKTGAGFIVGLTGDVMTMPGLPKVPAAMAMDVAENGTALGLF</sequence>
<dbReference type="EC" id="6.3.4.3" evidence="1"/>
<dbReference type="EMBL" id="CP000260">
    <property type="protein sequence ID" value="ABF34106.1"/>
    <property type="molecule type" value="Genomic_DNA"/>
</dbReference>
<dbReference type="SMR" id="Q1JGN8"/>
<dbReference type="KEGG" id="sph:MGAS10270_Spy1041"/>
<dbReference type="HOGENOM" id="CLU_003601_3_3_9"/>
<dbReference type="UniPathway" id="UPA00193"/>
<dbReference type="Proteomes" id="UP000002436">
    <property type="component" value="Chromosome"/>
</dbReference>
<dbReference type="GO" id="GO:0005524">
    <property type="term" value="F:ATP binding"/>
    <property type="evidence" value="ECO:0007669"/>
    <property type="project" value="UniProtKB-UniRule"/>
</dbReference>
<dbReference type="GO" id="GO:0004329">
    <property type="term" value="F:formate-tetrahydrofolate ligase activity"/>
    <property type="evidence" value="ECO:0007669"/>
    <property type="project" value="UniProtKB-UniRule"/>
</dbReference>
<dbReference type="GO" id="GO:0035999">
    <property type="term" value="P:tetrahydrofolate interconversion"/>
    <property type="evidence" value="ECO:0007669"/>
    <property type="project" value="UniProtKB-UniRule"/>
</dbReference>
<dbReference type="CDD" id="cd00477">
    <property type="entry name" value="FTHFS"/>
    <property type="match status" value="1"/>
</dbReference>
<dbReference type="FunFam" id="3.30.1510.10:FF:000001">
    <property type="entry name" value="Formate--tetrahydrofolate ligase"/>
    <property type="match status" value="1"/>
</dbReference>
<dbReference type="FunFam" id="3.10.410.10:FF:000001">
    <property type="entry name" value="Putative formate--tetrahydrofolate ligase"/>
    <property type="match status" value="1"/>
</dbReference>
<dbReference type="Gene3D" id="3.30.1510.10">
    <property type="entry name" value="Domain 2, N(10)-formyltetrahydrofolate synthetase"/>
    <property type="match status" value="1"/>
</dbReference>
<dbReference type="Gene3D" id="3.10.410.10">
    <property type="entry name" value="Formyltetrahydrofolate synthetase, domain 3"/>
    <property type="match status" value="1"/>
</dbReference>
<dbReference type="Gene3D" id="3.40.50.300">
    <property type="entry name" value="P-loop containing nucleotide triphosphate hydrolases"/>
    <property type="match status" value="1"/>
</dbReference>
<dbReference type="HAMAP" id="MF_01543">
    <property type="entry name" value="FTHFS"/>
    <property type="match status" value="1"/>
</dbReference>
<dbReference type="InterPro" id="IPR000559">
    <property type="entry name" value="Formate_THF_ligase"/>
</dbReference>
<dbReference type="InterPro" id="IPR020628">
    <property type="entry name" value="Formate_THF_ligase_CS"/>
</dbReference>
<dbReference type="InterPro" id="IPR027417">
    <property type="entry name" value="P-loop_NTPase"/>
</dbReference>
<dbReference type="NCBIfam" id="NF010030">
    <property type="entry name" value="PRK13505.1"/>
    <property type="match status" value="1"/>
</dbReference>
<dbReference type="Pfam" id="PF01268">
    <property type="entry name" value="FTHFS"/>
    <property type="match status" value="1"/>
</dbReference>
<dbReference type="SUPFAM" id="SSF52540">
    <property type="entry name" value="P-loop containing nucleoside triphosphate hydrolases"/>
    <property type="match status" value="1"/>
</dbReference>
<dbReference type="PROSITE" id="PS00721">
    <property type="entry name" value="FTHFS_1"/>
    <property type="match status" value="1"/>
</dbReference>
<dbReference type="PROSITE" id="PS00722">
    <property type="entry name" value="FTHFS_2"/>
    <property type="match status" value="1"/>
</dbReference>
<organism>
    <name type="scientific">Streptococcus pyogenes serotype M2 (strain MGAS10270)</name>
    <dbReference type="NCBI Taxonomy" id="370552"/>
    <lineage>
        <taxon>Bacteria</taxon>
        <taxon>Bacillati</taxon>
        <taxon>Bacillota</taxon>
        <taxon>Bacilli</taxon>
        <taxon>Lactobacillales</taxon>
        <taxon>Streptococcaceae</taxon>
        <taxon>Streptococcus</taxon>
    </lineage>
</organism>
<gene>
    <name evidence="1" type="primary">fhs1</name>
    <name type="ordered locus">MGAS10270_Spy1041</name>
</gene>
<proteinExistence type="inferred from homology"/>